<gene>
    <name evidence="1" type="primary">gpmI</name>
    <name type="synonym">pgm</name>
    <name type="ordered locus">MHJ_0595</name>
</gene>
<protein>
    <recommendedName>
        <fullName evidence="1">2,3-bisphosphoglycerate-independent phosphoglycerate mutase</fullName>
        <shortName evidence="1">BPG-independent PGAM</shortName>
        <shortName evidence="1">Phosphoglyceromutase</shortName>
        <shortName evidence="1">iPGM</shortName>
        <ecNumber evidence="1">5.4.2.12</ecNumber>
    </recommendedName>
</protein>
<feature type="chain" id="PRO_0000212171" description="2,3-bisphosphoglycerate-independent phosphoglycerate mutase">
    <location>
        <begin position="1"/>
        <end position="505"/>
    </location>
</feature>
<feature type="active site" description="Phosphoserine intermediate" evidence="1">
    <location>
        <position position="61"/>
    </location>
</feature>
<feature type="binding site" evidence="1">
    <location>
        <position position="11"/>
    </location>
    <ligand>
        <name>Mn(2+)</name>
        <dbReference type="ChEBI" id="CHEBI:29035"/>
        <label>2</label>
    </ligand>
</feature>
<feature type="binding site" evidence="1">
    <location>
        <position position="61"/>
    </location>
    <ligand>
        <name>Mn(2+)</name>
        <dbReference type="ChEBI" id="CHEBI:29035"/>
        <label>2</label>
    </ligand>
</feature>
<feature type="binding site" evidence="1">
    <location>
        <position position="122"/>
    </location>
    <ligand>
        <name>substrate</name>
    </ligand>
</feature>
<feature type="binding site" evidence="1">
    <location>
        <begin position="152"/>
        <end position="153"/>
    </location>
    <ligand>
        <name>substrate</name>
    </ligand>
</feature>
<feature type="binding site" evidence="1">
    <location>
        <position position="184"/>
    </location>
    <ligand>
        <name>substrate</name>
    </ligand>
</feature>
<feature type="binding site" evidence="1">
    <location>
        <position position="190"/>
    </location>
    <ligand>
        <name>substrate</name>
    </ligand>
</feature>
<feature type="binding site" evidence="1">
    <location>
        <begin position="258"/>
        <end position="261"/>
    </location>
    <ligand>
        <name>substrate</name>
    </ligand>
</feature>
<feature type="binding site" evidence="1">
    <location>
        <position position="331"/>
    </location>
    <ligand>
        <name>substrate</name>
    </ligand>
</feature>
<feature type="binding site" evidence="1">
    <location>
        <position position="396"/>
    </location>
    <ligand>
        <name>Mn(2+)</name>
        <dbReference type="ChEBI" id="CHEBI:29035"/>
        <label>1</label>
    </ligand>
</feature>
<feature type="binding site" evidence="1">
    <location>
        <position position="400"/>
    </location>
    <ligand>
        <name>Mn(2+)</name>
        <dbReference type="ChEBI" id="CHEBI:29035"/>
        <label>1</label>
    </ligand>
</feature>
<feature type="binding site" evidence="1">
    <location>
        <position position="437"/>
    </location>
    <ligand>
        <name>Mn(2+)</name>
        <dbReference type="ChEBI" id="CHEBI:29035"/>
        <label>2</label>
    </ligand>
</feature>
<feature type="binding site" evidence="1">
    <location>
        <position position="438"/>
    </location>
    <ligand>
        <name>Mn(2+)</name>
        <dbReference type="ChEBI" id="CHEBI:29035"/>
        <label>2</label>
    </ligand>
</feature>
<feature type="binding site" evidence="1">
    <location>
        <position position="455"/>
    </location>
    <ligand>
        <name>Mn(2+)</name>
        <dbReference type="ChEBI" id="CHEBI:29035"/>
        <label>1</label>
    </ligand>
</feature>
<dbReference type="EC" id="5.4.2.12" evidence="1"/>
<dbReference type="EMBL" id="AE017243">
    <property type="protein sequence ID" value="AAZ44679.1"/>
    <property type="molecule type" value="Genomic_DNA"/>
</dbReference>
<dbReference type="RefSeq" id="WP_011284327.1">
    <property type="nucleotide sequence ID" value="NC_007295.1"/>
</dbReference>
<dbReference type="SMR" id="Q4A992"/>
<dbReference type="GeneID" id="41334895"/>
<dbReference type="KEGG" id="mhj:MHJ_0595"/>
<dbReference type="eggNOG" id="COG0696">
    <property type="taxonomic scope" value="Bacteria"/>
</dbReference>
<dbReference type="HOGENOM" id="CLU_026099_2_0_14"/>
<dbReference type="OrthoDB" id="9800863at2"/>
<dbReference type="UniPathway" id="UPA00109">
    <property type="reaction ID" value="UER00186"/>
</dbReference>
<dbReference type="Proteomes" id="UP000000548">
    <property type="component" value="Chromosome"/>
</dbReference>
<dbReference type="GO" id="GO:0005829">
    <property type="term" value="C:cytosol"/>
    <property type="evidence" value="ECO:0007669"/>
    <property type="project" value="TreeGrafter"/>
</dbReference>
<dbReference type="GO" id="GO:0030145">
    <property type="term" value="F:manganese ion binding"/>
    <property type="evidence" value="ECO:0007669"/>
    <property type="project" value="UniProtKB-UniRule"/>
</dbReference>
<dbReference type="GO" id="GO:0004619">
    <property type="term" value="F:phosphoglycerate mutase activity"/>
    <property type="evidence" value="ECO:0007669"/>
    <property type="project" value="UniProtKB-EC"/>
</dbReference>
<dbReference type="GO" id="GO:0006007">
    <property type="term" value="P:glucose catabolic process"/>
    <property type="evidence" value="ECO:0007669"/>
    <property type="project" value="InterPro"/>
</dbReference>
<dbReference type="GO" id="GO:0006096">
    <property type="term" value="P:glycolytic process"/>
    <property type="evidence" value="ECO:0007669"/>
    <property type="project" value="UniProtKB-UniRule"/>
</dbReference>
<dbReference type="CDD" id="cd16010">
    <property type="entry name" value="iPGM"/>
    <property type="match status" value="1"/>
</dbReference>
<dbReference type="FunFam" id="3.40.1450.10:FF:000002">
    <property type="entry name" value="2,3-bisphosphoglycerate-independent phosphoglycerate mutase"/>
    <property type="match status" value="1"/>
</dbReference>
<dbReference type="Gene3D" id="3.40.720.10">
    <property type="entry name" value="Alkaline Phosphatase, subunit A"/>
    <property type="match status" value="1"/>
</dbReference>
<dbReference type="Gene3D" id="3.40.1450.10">
    <property type="entry name" value="BPG-independent phosphoglycerate mutase, domain B"/>
    <property type="match status" value="1"/>
</dbReference>
<dbReference type="HAMAP" id="MF_01038">
    <property type="entry name" value="GpmI"/>
    <property type="match status" value="1"/>
</dbReference>
<dbReference type="InterPro" id="IPR017850">
    <property type="entry name" value="Alkaline_phosphatase_core_sf"/>
</dbReference>
<dbReference type="InterPro" id="IPR011258">
    <property type="entry name" value="BPG-indep_PGM_N"/>
</dbReference>
<dbReference type="InterPro" id="IPR006124">
    <property type="entry name" value="Metalloenzyme"/>
</dbReference>
<dbReference type="InterPro" id="IPR036646">
    <property type="entry name" value="PGAM_B_sf"/>
</dbReference>
<dbReference type="InterPro" id="IPR005995">
    <property type="entry name" value="Pgm_bpd_ind"/>
</dbReference>
<dbReference type="NCBIfam" id="TIGR01307">
    <property type="entry name" value="pgm_bpd_ind"/>
    <property type="match status" value="1"/>
</dbReference>
<dbReference type="PANTHER" id="PTHR31637">
    <property type="entry name" value="2,3-BISPHOSPHOGLYCERATE-INDEPENDENT PHOSPHOGLYCERATE MUTASE"/>
    <property type="match status" value="1"/>
</dbReference>
<dbReference type="PANTHER" id="PTHR31637:SF0">
    <property type="entry name" value="2,3-BISPHOSPHOGLYCERATE-INDEPENDENT PHOSPHOGLYCERATE MUTASE"/>
    <property type="match status" value="1"/>
</dbReference>
<dbReference type="Pfam" id="PF06415">
    <property type="entry name" value="iPGM_N"/>
    <property type="match status" value="1"/>
</dbReference>
<dbReference type="Pfam" id="PF01676">
    <property type="entry name" value="Metalloenzyme"/>
    <property type="match status" value="1"/>
</dbReference>
<dbReference type="PIRSF" id="PIRSF001492">
    <property type="entry name" value="IPGAM"/>
    <property type="match status" value="1"/>
</dbReference>
<dbReference type="SUPFAM" id="SSF64158">
    <property type="entry name" value="2,3-Bisphosphoglycerate-independent phosphoglycerate mutase, substrate-binding domain"/>
    <property type="match status" value="1"/>
</dbReference>
<dbReference type="SUPFAM" id="SSF53649">
    <property type="entry name" value="Alkaline phosphatase-like"/>
    <property type="match status" value="1"/>
</dbReference>
<organism>
    <name type="scientific">Mesomycoplasma hyopneumoniae (strain J / ATCC 25934 / NCTC 10110)</name>
    <name type="common">Mycoplasma hyopneumoniae</name>
    <dbReference type="NCBI Taxonomy" id="262719"/>
    <lineage>
        <taxon>Bacteria</taxon>
        <taxon>Bacillati</taxon>
        <taxon>Mycoplasmatota</taxon>
        <taxon>Mycoplasmoidales</taxon>
        <taxon>Metamycoplasmataceae</taxon>
        <taxon>Mesomycoplasma</taxon>
    </lineage>
</organism>
<name>GPMI_MESHJ</name>
<accession>Q4A992</accession>
<comment type="function">
    <text evidence="1">Catalyzes the interconversion of 2-phosphoglycerate and 3-phosphoglycerate.</text>
</comment>
<comment type="catalytic activity">
    <reaction evidence="1">
        <text>(2R)-2-phosphoglycerate = (2R)-3-phosphoglycerate</text>
        <dbReference type="Rhea" id="RHEA:15901"/>
        <dbReference type="ChEBI" id="CHEBI:58272"/>
        <dbReference type="ChEBI" id="CHEBI:58289"/>
        <dbReference type="EC" id="5.4.2.12"/>
    </reaction>
</comment>
<comment type="cofactor">
    <cofactor evidence="1">
        <name>Mn(2+)</name>
        <dbReference type="ChEBI" id="CHEBI:29035"/>
    </cofactor>
    <text evidence="1">Binds 2 manganese ions per subunit.</text>
</comment>
<comment type="pathway">
    <text evidence="1">Carbohydrate degradation; glycolysis; pyruvate from D-glyceraldehyde 3-phosphate: step 3/5.</text>
</comment>
<comment type="subunit">
    <text evidence="1">Monomer.</text>
</comment>
<comment type="similarity">
    <text evidence="1">Belongs to the BPG-independent phosphoglycerate mutase family.</text>
</comment>
<proteinExistence type="inferred from homology"/>
<keyword id="KW-0324">Glycolysis</keyword>
<keyword id="KW-0413">Isomerase</keyword>
<keyword id="KW-0464">Manganese</keyword>
<keyword id="KW-0479">Metal-binding</keyword>
<evidence type="ECO:0000255" key="1">
    <source>
        <dbReference type="HAMAP-Rule" id="MF_01038"/>
    </source>
</evidence>
<reference key="1">
    <citation type="journal article" date="2005" name="J. Bacteriol.">
        <title>Swine and poultry pathogens: the complete genome sequences of two strains of Mycoplasma hyopneumoniae and a strain of Mycoplasma synoviae.</title>
        <authorList>
            <person name="Vasconcelos A.T.R."/>
            <person name="Ferreira H.B."/>
            <person name="Bizarro C.V."/>
            <person name="Bonatto S.L."/>
            <person name="Carvalho M.O."/>
            <person name="Pinto P.M."/>
            <person name="Almeida D.F."/>
            <person name="Almeida L.G.P."/>
            <person name="Almeida R."/>
            <person name="Alves-Junior L."/>
            <person name="Assuncao E.N."/>
            <person name="Azevedo V.A.C."/>
            <person name="Bogo M.R."/>
            <person name="Brigido M.M."/>
            <person name="Brocchi M."/>
            <person name="Burity H.A."/>
            <person name="Camargo A.A."/>
            <person name="Camargo S.S."/>
            <person name="Carepo M.S."/>
            <person name="Carraro D.M."/>
            <person name="de Mattos Cascardo J.C."/>
            <person name="Castro L.A."/>
            <person name="Cavalcanti G."/>
            <person name="Chemale G."/>
            <person name="Collevatti R.G."/>
            <person name="Cunha C.W."/>
            <person name="Dallagiovanna B."/>
            <person name="Dambros B.P."/>
            <person name="Dellagostin O.A."/>
            <person name="Falcao C."/>
            <person name="Fantinatti-Garboggini F."/>
            <person name="Felipe M.S.S."/>
            <person name="Fiorentin L."/>
            <person name="Franco G.R."/>
            <person name="Freitas N.S.A."/>
            <person name="Frias D."/>
            <person name="Grangeiro T.B."/>
            <person name="Grisard E.C."/>
            <person name="Guimaraes C.T."/>
            <person name="Hungria M."/>
            <person name="Jardim S.N."/>
            <person name="Krieger M.A."/>
            <person name="Laurino J.P."/>
            <person name="Lima L.F.A."/>
            <person name="Lopes M.I."/>
            <person name="Loreto E.L.S."/>
            <person name="Madeira H.M.F."/>
            <person name="Manfio G.P."/>
            <person name="Maranhao A.Q."/>
            <person name="Martinkovics C.T."/>
            <person name="Medeiros S.R.B."/>
            <person name="Moreira M.A.M."/>
            <person name="Neiva M."/>
            <person name="Ramalho-Neto C.E."/>
            <person name="Nicolas M.F."/>
            <person name="Oliveira S.C."/>
            <person name="Paixao R.F.C."/>
            <person name="Pedrosa F.O."/>
            <person name="Pena S.D.J."/>
            <person name="Pereira M."/>
            <person name="Pereira-Ferrari L."/>
            <person name="Piffer I."/>
            <person name="Pinto L.S."/>
            <person name="Potrich D.P."/>
            <person name="Salim A.C.M."/>
            <person name="Santos F.R."/>
            <person name="Schmitt R."/>
            <person name="Schneider M.P.C."/>
            <person name="Schrank A."/>
            <person name="Schrank I.S."/>
            <person name="Schuck A.F."/>
            <person name="Seuanez H.N."/>
            <person name="Silva D.W."/>
            <person name="Silva R."/>
            <person name="Silva S.C."/>
            <person name="Soares C.M.A."/>
            <person name="Souza K.R.L."/>
            <person name="Souza R.C."/>
            <person name="Staats C.C."/>
            <person name="Steffens M.B.R."/>
            <person name="Teixeira S.M.R."/>
            <person name="Urmenyi T.P."/>
            <person name="Vainstein M.H."/>
            <person name="Zuccherato L.W."/>
            <person name="Simpson A.J.G."/>
            <person name="Zaha A."/>
        </authorList>
    </citation>
    <scope>NUCLEOTIDE SEQUENCE [LARGE SCALE GENOMIC DNA]</scope>
    <source>
        <strain>J / ATCC 25934 / NCTC 10110</strain>
    </source>
</reference>
<sequence length="505" mass="56976">MKKKLVLIIIDGLGLRLESQGNGFALAKTPVFDRLFQEYPNSLIAASGQEVGLPEGQMGNSEVGHLNIGAGFVVYTGISIINNALKTGKFFENEKFILAFRHSIKTGFPLQIMGLFSPGGVHSHQDHLFALIDFAANFGVKKLNLHLFGDGRDVGPKSIKPWIKMLNLKLKNYEDYKIASISGRFYSMDRDKMFDRVELGYNALLGKAENTFTDPIDYINFQYEKGVSDEFFEPAINLKVNKKDFLADDHPVIFFNFRPDRARQLSHLILQTDLYEQKPKNPIKTDVFVSMMKYEGINCLVAFEEMRVENPLGKLISMAGFRQLRLAETQKYAHVTFFVDGGVELELENSDRILIDSLKVQSYADFPQMSAVEITDKLLEVGQNYDFIIMNFANPDMVGHTGDLKATIKAVEILDFQIGRICKWAEEKNFDFFITADHGNAELTEDENGNPSTKHTTFPVMLISSDKTIKLKSGKLANIAPTILDYLGLDKHPDMDHDSLIIKDK</sequence>